<keyword id="KW-1185">Reference proteome</keyword>
<dbReference type="EMBL" id="AAFI02000044">
    <property type="protein sequence ID" value="EAL66432.1"/>
    <property type="molecule type" value="Genomic_DNA"/>
</dbReference>
<dbReference type="RefSeq" id="XP_640411.1">
    <property type="nucleotide sequence ID" value="XM_635319.1"/>
</dbReference>
<dbReference type="FunCoup" id="Q54T40">
    <property type="interactions" value="362"/>
</dbReference>
<dbReference type="PaxDb" id="44689-DDB0205091"/>
<dbReference type="EnsemblProtists" id="EAL66432">
    <property type="protein sequence ID" value="EAL66432"/>
    <property type="gene ID" value="DDB_G0282021"/>
</dbReference>
<dbReference type="GeneID" id="8623366"/>
<dbReference type="KEGG" id="ddi:DDB_G0282021"/>
<dbReference type="dictyBase" id="DDB_G0282021"/>
<dbReference type="VEuPathDB" id="AmoebaDB:DDB_G0282021"/>
<dbReference type="eggNOG" id="ENOG502REGY">
    <property type="taxonomic scope" value="Eukaryota"/>
</dbReference>
<dbReference type="HOGENOM" id="CLU_1306833_0_0_1"/>
<dbReference type="InParanoid" id="Q54T40"/>
<dbReference type="OMA" id="MNNIYTT"/>
<dbReference type="PRO" id="PR:Q54T40"/>
<dbReference type="Proteomes" id="UP000002195">
    <property type="component" value="Chromosome 3"/>
</dbReference>
<sequence>MNNIYTTSISLKRKTGDFIIKKEQLSTKDIKEMVMVIREIFKMRGLERVTRELKGFIHNFPSGSYIKFTLKVDHDFSVISSGGGLLGYISDSVYDAYDTFVFSNVDSYLPGKPLKSIDELRFKWTNIQQIVPLLEYQADPSILSKSRDYSTHIDYSCNNHVHPIKVNFSPKQISTQHSLHQQIEKDNLKLSSSPKLKSKEGIVGSPTARAF</sequence>
<feature type="chain" id="PRO_0000351239" description="Uncharacterized protein DDB_G0282021">
    <location>
        <begin position="1"/>
        <end position="211"/>
    </location>
</feature>
<proteinExistence type="predicted"/>
<accession>Q54T40</accession>
<name>Y0509_DICDI</name>
<reference key="1">
    <citation type="journal article" date="2005" name="Nature">
        <title>The genome of the social amoeba Dictyostelium discoideum.</title>
        <authorList>
            <person name="Eichinger L."/>
            <person name="Pachebat J.A."/>
            <person name="Gloeckner G."/>
            <person name="Rajandream M.A."/>
            <person name="Sucgang R."/>
            <person name="Berriman M."/>
            <person name="Song J."/>
            <person name="Olsen R."/>
            <person name="Szafranski K."/>
            <person name="Xu Q."/>
            <person name="Tunggal B."/>
            <person name="Kummerfeld S."/>
            <person name="Madera M."/>
            <person name="Konfortov B.A."/>
            <person name="Rivero F."/>
            <person name="Bankier A.T."/>
            <person name="Lehmann R."/>
            <person name="Hamlin N."/>
            <person name="Davies R."/>
            <person name="Gaudet P."/>
            <person name="Fey P."/>
            <person name="Pilcher K."/>
            <person name="Chen G."/>
            <person name="Saunders D."/>
            <person name="Sodergren E.J."/>
            <person name="Davis P."/>
            <person name="Kerhornou A."/>
            <person name="Nie X."/>
            <person name="Hall N."/>
            <person name="Anjard C."/>
            <person name="Hemphill L."/>
            <person name="Bason N."/>
            <person name="Farbrother P."/>
            <person name="Desany B."/>
            <person name="Just E."/>
            <person name="Morio T."/>
            <person name="Rost R."/>
            <person name="Churcher C.M."/>
            <person name="Cooper J."/>
            <person name="Haydock S."/>
            <person name="van Driessche N."/>
            <person name="Cronin A."/>
            <person name="Goodhead I."/>
            <person name="Muzny D.M."/>
            <person name="Mourier T."/>
            <person name="Pain A."/>
            <person name="Lu M."/>
            <person name="Harper D."/>
            <person name="Lindsay R."/>
            <person name="Hauser H."/>
            <person name="James K.D."/>
            <person name="Quiles M."/>
            <person name="Madan Babu M."/>
            <person name="Saito T."/>
            <person name="Buchrieser C."/>
            <person name="Wardroper A."/>
            <person name="Felder M."/>
            <person name="Thangavelu M."/>
            <person name="Johnson D."/>
            <person name="Knights A."/>
            <person name="Loulseged H."/>
            <person name="Mungall K.L."/>
            <person name="Oliver K."/>
            <person name="Price C."/>
            <person name="Quail M.A."/>
            <person name="Urushihara H."/>
            <person name="Hernandez J."/>
            <person name="Rabbinowitsch E."/>
            <person name="Steffen D."/>
            <person name="Sanders M."/>
            <person name="Ma J."/>
            <person name="Kohara Y."/>
            <person name="Sharp S."/>
            <person name="Simmonds M.N."/>
            <person name="Spiegler S."/>
            <person name="Tivey A."/>
            <person name="Sugano S."/>
            <person name="White B."/>
            <person name="Walker D."/>
            <person name="Woodward J.R."/>
            <person name="Winckler T."/>
            <person name="Tanaka Y."/>
            <person name="Shaulsky G."/>
            <person name="Schleicher M."/>
            <person name="Weinstock G.M."/>
            <person name="Rosenthal A."/>
            <person name="Cox E.C."/>
            <person name="Chisholm R.L."/>
            <person name="Gibbs R.A."/>
            <person name="Loomis W.F."/>
            <person name="Platzer M."/>
            <person name="Kay R.R."/>
            <person name="Williams J.G."/>
            <person name="Dear P.H."/>
            <person name="Noegel A.A."/>
            <person name="Barrell B.G."/>
            <person name="Kuspa A."/>
        </authorList>
    </citation>
    <scope>NUCLEOTIDE SEQUENCE [LARGE SCALE GENOMIC DNA]</scope>
    <source>
        <strain>AX4</strain>
    </source>
</reference>
<gene>
    <name type="ORF">DDB_G0282021</name>
</gene>
<protein>
    <recommendedName>
        <fullName>Uncharacterized protein DDB_G0282021</fullName>
    </recommendedName>
</protein>
<organism>
    <name type="scientific">Dictyostelium discoideum</name>
    <name type="common">Social amoeba</name>
    <dbReference type="NCBI Taxonomy" id="44689"/>
    <lineage>
        <taxon>Eukaryota</taxon>
        <taxon>Amoebozoa</taxon>
        <taxon>Evosea</taxon>
        <taxon>Eumycetozoa</taxon>
        <taxon>Dictyostelia</taxon>
        <taxon>Dictyosteliales</taxon>
        <taxon>Dictyosteliaceae</taxon>
        <taxon>Dictyostelium</taxon>
    </lineage>
</organism>